<gene>
    <name evidence="1" type="primary">rpsI</name>
    <name type="ordered locus">SUN_0189</name>
</gene>
<feature type="chain" id="PRO_1000128186" description="Small ribosomal subunit protein uS9">
    <location>
        <begin position="1"/>
        <end position="129"/>
    </location>
</feature>
<feature type="region of interest" description="Disordered" evidence="2">
    <location>
        <begin position="107"/>
        <end position="129"/>
    </location>
</feature>
<feature type="compositionally biased region" description="Basic residues" evidence="2">
    <location>
        <begin position="114"/>
        <end position="129"/>
    </location>
</feature>
<sequence length="129" mass="14247">MATIYATGKRKAAIAKVWLTPGNGEMLINGKTLDQWLGGHETLKMKVRLPLEATKQLESMNVKATTLGGGYSAQADALKHGITKALVEFEPSFRAILKPMGLLTRDSRVVERKKPGKKKARRSPQFSKR</sequence>
<reference key="1">
    <citation type="journal article" date="2007" name="Proc. Natl. Acad. Sci. U.S.A.">
        <title>Deep-sea vent epsilon-proteobacterial genomes provide insights into emergence of pathogens.</title>
        <authorList>
            <person name="Nakagawa S."/>
            <person name="Takaki Y."/>
            <person name="Shimamura S."/>
            <person name="Reysenbach A.-L."/>
            <person name="Takai K."/>
            <person name="Horikoshi K."/>
        </authorList>
    </citation>
    <scope>NUCLEOTIDE SEQUENCE [LARGE SCALE GENOMIC DNA]</scope>
    <source>
        <strain>NBC37-1</strain>
    </source>
</reference>
<proteinExistence type="inferred from homology"/>
<organism>
    <name type="scientific">Sulfurovum sp. (strain NBC37-1)</name>
    <dbReference type="NCBI Taxonomy" id="387093"/>
    <lineage>
        <taxon>Bacteria</taxon>
        <taxon>Pseudomonadati</taxon>
        <taxon>Campylobacterota</taxon>
        <taxon>Epsilonproteobacteria</taxon>
        <taxon>Campylobacterales</taxon>
        <taxon>Sulfurovaceae</taxon>
        <taxon>Sulfurovum</taxon>
    </lineage>
</organism>
<protein>
    <recommendedName>
        <fullName evidence="1">Small ribosomal subunit protein uS9</fullName>
    </recommendedName>
    <alternativeName>
        <fullName evidence="3">30S ribosomal protein S9</fullName>
    </alternativeName>
</protein>
<evidence type="ECO:0000255" key="1">
    <source>
        <dbReference type="HAMAP-Rule" id="MF_00532"/>
    </source>
</evidence>
<evidence type="ECO:0000256" key="2">
    <source>
        <dbReference type="SAM" id="MobiDB-lite"/>
    </source>
</evidence>
<evidence type="ECO:0000305" key="3"/>
<keyword id="KW-0687">Ribonucleoprotein</keyword>
<keyword id="KW-0689">Ribosomal protein</keyword>
<comment type="similarity">
    <text evidence="1">Belongs to the universal ribosomal protein uS9 family.</text>
</comment>
<name>RS9_SULNB</name>
<accession>A6Q6P0</accession>
<dbReference type="EMBL" id="AP009179">
    <property type="protein sequence ID" value="BAF71149.1"/>
    <property type="molecule type" value="Genomic_DNA"/>
</dbReference>
<dbReference type="RefSeq" id="WP_011979882.1">
    <property type="nucleotide sequence ID" value="NC_009663.1"/>
</dbReference>
<dbReference type="SMR" id="A6Q6P0"/>
<dbReference type="STRING" id="387093.SUN_0189"/>
<dbReference type="KEGG" id="sun:SUN_0189"/>
<dbReference type="eggNOG" id="COG0103">
    <property type="taxonomic scope" value="Bacteria"/>
</dbReference>
<dbReference type="HOGENOM" id="CLU_046483_2_1_7"/>
<dbReference type="OrthoDB" id="9803965at2"/>
<dbReference type="Proteomes" id="UP000006378">
    <property type="component" value="Chromosome"/>
</dbReference>
<dbReference type="GO" id="GO:0022627">
    <property type="term" value="C:cytosolic small ribosomal subunit"/>
    <property type="evidence" value="ECO:0007669"/>
    <property type="project" value="TreeGrafter"/>
</dbReference>
<dbReference type="GO" id="GO:0003723">
    <property type="term" value="F:RNA binding"/>
    <property type="evidence" value="ECO:0007669"/>
    <property type="project" value="TreeGrafter"/>
</dbReference>
<dbReference type="GO" id="GO:0003735">
    <property type="term" value="F:structural constituent of ribosome"/>
    <property type="evidence" value="ECO:0007669"/>
    <property type="project" value="InterPro"/>
</dbReference>
<dbReference type="GO" id="GO:0006412">
    <property type="term" value="P:translation"/>
    <property type="evidence" value="ECO:0007669"/>
    <property type="project" value="UniProtKB-UniRule"/>
</dbReference>
<dbReference type="FunFam" id="3.30.230.10:FF:000001">
    <property type="entry name" value="30S ribosomal protein S9"/>
    <property type="match status" value="1"/>
</dbReference>
<dbReference type="Gene3D" id="3.30.230.10">
    <property type="match status" value="1"/>
</dbReference>
<dbReference type="HAMAP" id="MF_00532_B">
    <property type="entry name" value="Ribosomal_uS9_B"/>
    <property type="match status" value="1"/>
</dbReference>
<dbReference type="InterPro" id="IPR020568">
    <property type="entry name" value="Ribosomal_Su5_D2-typ_SF"/>
</dbReference>
<dbReference type="InterPro" id="IPR000754">
    <property type="entry name" value="Ribosomal_uS9"/>
</dbReference>
<dbReference type="InterPro" id="IPR023035">
    <property type="entry name" value="Ribosomal_uS9_bac/plastid"/>
</dbReference>
<dbReference type="InterPro" id="IPR020574">
    <property type="entry name" value="Ribosomal_uS9_CS"/>
</dbReference>
<dbReference type="InterPro" id="IPR014721">
    <property type="entry name" value="Ribsml_uS5_D2-typ_fold_subgr"/>
</dbReference>
<dbReference type="NCBIfam" id="NF001099">
    <property type="entry name" value="PRK00132.1"/>
    <property type="match status" value="1"/>
</dbReference>
<dbReference type="PANTHER" id="PTHR21569">
    <property type="entry name" value="RIBOSOMAL PROTEIN S9"/>
    <property type="match status" value="1"/>
</dbReference>
<dbReference type="PANTHER" id="PTHR21569:SF1">
    <property type="entry name" value="SMALL RIBOSOMAL SUBUNIT PROTEIN US9M"/>
    <property type="match status" value="1"/>
</dbReference>
<dbReference type="Pfam" id="PF00380">
    <property type="entry name" value="Ribosomal_S9"/>
    <property type="match status" value="1"/>
</dbReference>
<dbReference type="SUPFAM" id="SSF54211">
    <property type="entry name" value="Ribosomal protein S5 domain 2-like"/>
    <property type="match status" value="1"/>
</dbReference>
<dbReference type="PROSITE" id="PS00360">
    <property type="entry name" value="RIBOSOMAL_S9"/>
    <property type="match status" value="1"/>
</dbReference>